<sequence>MFKFNEEKGQLKCSFCGKTQEQVRKLVAGPGVYICDECIELCNEIVEEELGTEEEVELKNVPKPHEIRATLNDYVIGQEKAKKSLSVAMYNHYKRINAGGRADDVELSKSNIVMIGPTGSGKTLLAQTMARILNVPFAIADATSLTEAGYVGEDVENILLKLIQAADYDVEKAEKGIIYIDEIDKIARKSENPSITRDVSGEGVQQALLKILEGTVASVPPQGGRKHPHQEFIQIDTTNILFIVGGAFDGIDQSIKRRLGKKVIGFGNDSENRNLTQKEILAAALPEDLQKFGLIPEFIGRLPVMATLEPLDEEALVQILTKPKNALVKQYKKMLQLDDVELDFTEDALVEIAKLAIERKTGARGLRSIIEETMLDIMFEIPSREDIAKVIITAETLTGKRGPTLELKDGTIEHGKEKETA</sequence>
<accession>B1YJW0</accession>
<evidence type="ECO:0000255" key="1">
    <source>
        <dbReference type="HAMAP-Rule" id="MF_00175"/>
    </source>
</evidence>
<evidence type="ECO:0000255" key="2">
    <source>
        <dbReference type="PROSITE-ProRule" id="PRU01250"/>
    </source>
</evidence>
<reference key="1">
    <citation type="submission" date="2008-04" db="EMBL/GenBank/DDBJ databases">
        <title>Complete sequence of chromosome of Exiguobacterium sibiricum 255-15.</title>
        <authorList>
            <consortium name="US DOE Joint Genome Institute"/>
            <person name="Copeland A."/>
            <person name="Lucas S."/>
            <person name="Lapidus A."/>
            <person name="Glavina del Rio T."/>
            <person name="Dalin E."/>
            <person name="Tice H."/>
            <person name="Bruce D."/>
            <person name="Goodwin L."/>
            <person name="Pitluck S."/>
            <person name="Kiss H."/>
            <person name="Chertkov O."/>
            <person name="Monk C."/>
            <person name="Brettin T."/>
            <person name="Detter J.C."/>
            <person name="Han C."/>
            <person name="Kuske C.R."/>
            <person name="Schmutz J."/>
            <person name="Larimer F."/>
            <person name="Land M."/>
            <person name="Hauser L."/>
            <person name="Kyrpides N."/>
            <person name="Mikhailova N."/>
            <person name="Vishnivetskaya T."/>
            <person name="Rodrigues D.F."/>
            <person name="Gilichinsky D."/>
            <person name="Tiedje J."/>
            <person name="Richardson P."/>
        </authorList>
    </citation>
    <scope>NUCLEOTIDE SEQUENCE [LARGE SCALE GENOMIC DNA]</scope>
    <source>
        <strain>DSM 17290 / CCUG 55495 / CIP 109462 / JCM 13490 / 255-15</strain>
    </source>
</reference>
<feature type="chain" id="PRO_1000097954" description="ATP-dependent Clp protease ATP-binding subunit ClpX">
    <location>
        <begin position="1"/>
        <end position="421"/>
    </location>
</feature>
<feature type="domain" description="ClpX-type ZB" evidence="2">
    <location>
        <begin position="1"/>
        <end position="54"/>
    </location>
</feature>
<feature type="binding site" evidence="2">
    <location>
        <position position="13"/>
    </location>
    <ligand>
        <name>Zn(2+)</name>
        <dbReference type="ChEBI" id="CHEBI:29105"/>
    </ligand>
</feature>
<feature type="binding site" evidence="2">
    <location>
        <position position="16"/>
    </location>
    <ligand>
        <name>Zn(2+)</name>
        <dbReference type="ChEBI" id="CHEBI:29105"/>
    </ligand>
</feature>
<feature type="binding site" evidence="2">
    <location>
        <position position="35"/>
    </location>
    <ligand>
        <name>Zn(2+)</name>
        <dbReference type="ChEBI" id="CHEBI:29105"/>
    </ligand>
</feature>
<feature type="binding site" evidence="2">
    <location>
        <position position="38"/>
    </location>
    <ligand>
        <name>Zn(2+)</name>
        <dbReference type="ChEBI" id="CHEBI:29105"/>
    </ligand>
</feature>
<feature type="binding site" evidence="1">
    <location>
        <begin position="117"/>
        <end position="124"/>
    </location>
    <ligand>
        <name>ATP</name>
        <dbReference type="ChEBI" id="CHEBI:30616"/>
    </ligand>
</feature>
<dbReference type="EMBL" id="CP001022">
    <property type="protein sequence ID" value="ACB61598.1"/>
    <property type="molecule type" value="Genomic_DNA"/>
</dbReference>
<dbReference type="RefSeq" id="WP_012371015.1">
    <property type="nucleotide sequence ID" value="NC_010556.1"/>
</dbReference>
<dbReference type="SMR" id="B1YJW0"/>
<dbReference type="STRING" id="262543.Exig_2146"/>
<dbReference type="KEGG" id="esi:Exig_2146"/>
<dbReference type="eggNOG" id="COG1219">
    <property type="taxonomic scope" value="Bacteria"/>
</dbReference>
<dbReference type="HOGENOM" id="CLU_014218_8_2_9"/>
<dbReference type="OrthoDB" id="9804062at2"/>
<dbReference type="Proteomes" id="UP000001681">
    <property type="component" value="Chromosome"/>
</dbReference>
<dbReference type="GO" id="GO:0009376">
    <property type="term" value="C:HslUV protease complex"/>
    <property type="evidence" value="ECO:0007669"/>
    <property type="project" value="TreeGrafter"/>
</dbReference>
<dbReference type="GO" id="GO:0005524">
    <property type="term" value="F:ATP binding"/>
    <property type="evidence" value="ECO:0007669"/>
    <property type="project" value="UniProtKB-UniRule"/>
</dbReference>
<dbReference type="GO" id="GO:0016887">
    <property type="term" value="F:ATP hydrolysis activity"/>
    <property type="evidence" value="ECO:0007669"/>
    <property type="project" value="InterPro"/>
</dbReference>
<dbReference type="GO" id="GO:0140662">
    <property type="term" value="F:ATP-dependent protein folding chaperone"/>
    <property type="evidence" value="ECO:0007669"/>
    <property type="project" value="InterPro"/>
</dbReference>
<dbReference type="GO" id="GO:0046983">
    <property type="term" value="F:protein dimerization activity"/>
    <property type="evidence" value="ECO:0007669"/>
    <property type="project" value="InterPro"/>
</dbReference>
<dbReference type="GO" id="GO:0051082">
    <property type="term" value="F:unfolded protein binding"/>
    <property type="evidence" value="ECO:0007669"/>
    <property type="project" value="UniProtKB-UniRule"/>
</dbReference>
<dbReference type="GO" id="GO:0008270">
    <property type="term" value="F:zinc ion binding"/>
    <property type="evidence" value="ECO:0007669"/>
    <property type="project" value="InterPro"/>
</dbReference>
<dbReference type="GO" id="GO:0051301">
    <property type="term" value="P:cell division"/>
    <property type="evidence" value="ECO:0007669"/>
    <property type="project" value="TreeGrafter"/>
</dbReference>
<dbReference type="GO" id="GO:0051603">
    <property type="term" value="P:proteolysis involved in protein catabolic process"/>
    <property type="evidence" value="ECO:0007669"/>
    <property type="project" value="TreeGrafter"/>
</dbReference>
<dbReference type="CDD" id="cd19497">
    <property type="entry name" value="RecA-like_ClpX"/>
    <property type="match status" value="1"/>
</dbReference>
<dbReference type="FunFam" id="1.10.8.60:FF:000002">
    <property type="entry name" value="ATP-dependent Clp protease ATP-binding subunit ClpX"/>
    <property type="match status" value="1"/>
</dbReference>
<dbReference type="FunFam" id="3.40.50.300:FF:000005">
    <property type="entry name" value="ATP-dependent Clp protease ATP-binding subunit ClpX"/>
    <property type="match status" value="1"/>
</dbReference>
<dbReference type="Gene3D" id="1.10.8.60">
    <property type="match status" value="1"/>
</dbReference>
<dbReference type="Gene3D" id="6.20.220.10">
    <property type="entry name" value="ClpX chaperone, C4-type zinc finger domain"/>
    <property type="match status" value="1"/>
</dbReference>
<dbReference type="Gene3D" id="3.40.50.300">
    <property type="entry name" value="P-loop containing nucleotide triphosphate hydrolases"/>
    <property type="match status" value="1"/>
</dbReference>
<dbReference type="HAMAP" id="MF_00175">
    <property type="entry name" value="ClpX"/>
    <property type="match status" value="1"/>
</dbReference>
<dbReference type="InterPro" id="IPR003593">
    <property type="entry name" value="AAA+_ATPase"/>
</dbReference>
<dbReference type="InterPro" id="IPR050052">
    <property type="entry name" value="ATP-dep_Clp_protease_ClpX"/>
</dbReference>
<dbReference type="InterPro" id="IPR003959">
    <property type="entry name" value="ATPase_AAA_core"/>
</dbReference>
<dbReference type="InterPro" id="IPR019489">
    <property type="entry name" value="Clp_ATPase_C"/>
</dbReference>
<dbReference type="InterPro" id="IPR004487">
    <property type="entry name" value="Clp_protease_ATP-bd_su_ClpX"/>
</dbReference>
<dbReference type="InterPro" id="IPR046425">
    <property type="entry name" value="ClpX_bact"/>
</dbReference>
<dbReference type="InterPro" id="IPR027417">
    <property type="entry name" value="P-loop_NTPase"/>
</dbReference>
<dbReference type="InterPro" id="IPR010603">
    <property type="entry name" value="Znf_CppX_C4"/>
</dbReference>
<dbReference type="InterPro" id="IPR038366">
    <property type="entry name" value="Znf_CppX_C4_sf"/>
</dbReference>
<dbReference type="NCBIfam" id="TIGR00382">
    <property type="entry name" value="clpX"/>
    <property type="match status" value="1"/>
</dbReference>
<dbReference type="NCBIfam" id="NF003745">
    <property type="entry name" value="PRK05342.1"/>
    <property type="match status" value="1"/>
</dbReference>
<dbReference type="PANTHER" id="PTHR48102:SF7">
    <property type="entry name" value="ATP-DEPENDENT CLP PROTEASE ATP-BINDING SUBUNIT CLPX-LIKE, MITOCHONDRIAL"/>
    <property type="match status" value="1"/>
</dbReference>
<dbReference type="PANTHER" id="PTHR48102">
    <property type="entry name" value="ATP-DEPENDENT CLP PROTEASE ATP-BINDING SUBUNIT CLPX-LIKE, MITOCHONDRIAL-RELATED"/>
    <property type="match status" value="1"/>
</dbReference>
<dbReference type="Pfam" id="PF07724">
    <property type="entry name" value="AAA_2"/>
    <property type="match status" value="1"/>
</dbReference>
<dbReference type="Pfam" id="PF10431">
    <property type="entry name" value="ClpB_D2-small"/>
    <property type="match status" value="1"/>
</dbReference>
<dbReference type="Pfam" id="PF06689">
    <property type="entry name" value="zf-C4_ClpX"/>
    <property type="match status" value="1"/>
</dbReference>
<dbReference type="SMART" id="SM00382">
    <property type="entry name" value="AAA"/>
    <property type="match status" value="1"/>
</dbReference>
<dbReference type="SMART" id="SM01086">
    <property type="entry name" value="ClpB_D2-small"/>
    <property type="match status" value="1"/>
</dbReference>
<dbReference type="SMART" id="SM00994">
    <property type="entry name" value="zf-C4_ClpX"/>
    <property type="match status" value="1"/>
</dbReference>
<dbReference type="SUPFAM" id="SSF57716">
    <property type="entry name" value="Glucocorticoid receptor-like (DNA-binding domain)"/>
    <property type="match status" value="1"/>
</dbReference>
<dbReference type="SUPFAM" id="SSF52540">
    <property type="entry name" value="P-loop containing nucleoside triphosphate hydrolases"/>
    <property type="match status" value="1"/>
</dbReference>
<dbReference type="PROSITE" id="PS51902">
    <property type="entry name" value="CLPX_ZB"/>
    <property type="match status" value="1"/>
</dbReference>
<gene>
    <name evidence="1" type="primary">clpX</name>
    <name type="ordered locus">Exig_2146</name>
</gene>
<keyword id="KW-0067">ATP-binding</keyword>
<keyword id="KW-0143">Chaperone</keyword>
<keyword id="KW-0479">Metal-binding</keyword>
<keyword id="KW-0547">Nucleotide-binding</keyword>
<keyword id="KW-1185">Reference proteome</keyword>
<keyword id="KW-0862">Zinc</keyword>
<name>CLPX_EXIS2</name>
<comment type="function">
    <text evidence="1">ATP-dependent specificity component of the Clp protease. It directs the protease to specific substrates. Can perform chaperone functions in the absence of ClpP.</text>
</comment>
<comment type="subunit">
    <text evidence="1">Component of the ClpX-ClpP complex. Forms a hexameric ring that, in the presence of ATP, binds to fourteen ClpP subunits assembled into a disk-like structure with a central cavity, resembling the structure of eukaryotic proteasomes.</text>
</comment>
<comment type="similarity">
    <text evidence="1">Belongs to the ClpX chaperone family.</text>
</comment>
<organism>
    <name type="scientific">Exiguobacterium sibiricum (strain DSM 17290 / CCUG 55495 / CIP 109462 / JCM 13490 / 255-15)</name>
    <dbReference type="NCBI Taxonomy" id="262543"/>
    <lineage>
        <taxon>Bacteria</taxon>
        <taxon>Bacillati</taxon>
        <taxon>Bacillota</taxon>
        <taxon>Bacilli</taxon>
        <taxon>Bacillales</taxon>
        <taxon>Bacillales Family XII. Incertae Sedis</taxon>
        <taxon>Exiguobacterium</taxon>
    </lineage>
</organism>
<proteinExistence type="inferred from homology"/>
<protein>
    <recommendedName>
        <fullName evidence="1">ATP-dependent Clp protease ATP-binding subunit ClpX</fullName>
    </recommendedName>
</protein>